<accession>Q07508</accession>
<accession>D6VRR1</accession>
<gene>
    <name type="primary">LUC7</name>
    <name type="synonym">EPE1</name>
    <name type="synonym">EXM2</name>
    <name type="ordered locus">YDL087C</name>
</gene>
<comment type="function">
    <text evidence="3 4">Component of the U1 snRNP particle, which recognizes and binds the 5'-splice site of pre-mRNA. Together with other non-snRNP factors, U1 snRNP forms the spliceosomal commitment complex, that targets pre-mRNA to the splicing pathway.</text>
</comment>
<comment type="subunit">
    <text evidence="2 3 5">Component of the 18S U1 snRNP particle, a subcomplex of the spliceosome.</text>
</comment>
<comment type="subcellular location">
    <subcellularLocation>
        <location evidence="6">Nucleus</location>
    </subcellularLocation>
</comment>
<comment type="miscellaneous">
    <text evidence="7">Present with 2270 molecules/cell in log phase SD medium.</text>
</comment>
<comment type="similarity">
    <text evidence="8">Belongs to the Luc7 family.</text>
</comment>
<name>LUC7_YEAST</name>
<evidence type="ECO:0000255" key="1"/>
<evidence type="ECO:0000269" key="2">
    <source>
    </source>
</evidence>
<evidence type="ECO:0000269" key="3">
    <source>
    </source>
</evidence>
<evidence type="ECO:0000269" key="4">
    <source>
    </source>
</evidence>
<evidence type="ECO:0000269" key="5">
    <source>
    </source>
</evidence>
<evidence type="ECO:0000269" key="6">
    <source>
    </source>
</evidence>
<evidence type="ECO:0000269" key="7">
    <source>
    </source>
</evidence>
<evidence type="ECO:0000305" key="8"/>
<evidence type="ECO:0007744" key="9">
    <source>
    </source>
</evidence>
<evidence type="ECO:0007829" key="10">
    <source>
        <dbReference type="PDB" id="5ZWN"/>
    </source>
</evidence>
<evidence type="ECO:0007829" key="11">
    <source>
        <dbReference type="PDB" id="6N7R"/>
    </source>
</evidence>
<dbReference type="EMBL" id="Z74135">
    <property type="protein sequence ID" value="CAA98653.1"/>
    <property type="molecule type" value="Genomic_DNA"/>
</dbReference>
<dbReference type="EMBL" id="BK006938">
    <property type="protein sequence ID" value="DAA11771.1"/>
    <property type="molecule type" value="Genomic_DNA"/>
</dbReference>
<dbReference type="PIR" id="S67623">
    <property type="entry name" value="S67623"/>
</dbReference>
<dbReference type="RefSeq" id="NP_010196.1">
    <property type="nucleotide sequence ID" value="NM_001180146.1"/>
</dbReference>
<dbReference type="PDB" id="5ZWN">
    <property type="method" value="EM"/>
    <property type="resolution" value="3.30 A"/>
    <property type="chains" value="Y=1-261"/>
</dbReference>
<dbReference type="PDB" id="6G90">
    <property type="method" value="EM"/>
    <property type="resolution" value="4.00 A"/>
    <property type="chains" value="H=1-261"/>
</dbReference>
<dbReference type="PDB" id="6N7P">
    <property type="method" value="EM"/>
    <property type="resolution" value="3.60 A"/>
    <property type="chains" value="I=1-261"/>
</dbReference>
<dbReference type="PDB" id="6N7R">
    <property type="method" value="EM"/>
    <property type="resolution" value="3.20 A"/>
    <property type="chains" value="I=1-261"/>
</dbReference>
<dbReference type="PDB" id="7OQC">
    <property type="method" value="EM"/>
    <property type="resolution" value="4.10 A"/>
    <property type="chains" value="H=1-261"/>
</dbReference>
<dbReference type="PDB" id="7OQE">
    <property type="method" value="EM"/>
    <property type="resolution" value="5.90 A"/>
    <property type="chains" value="H=1-261"/>
</dbReference>
<dbReference type="PDB" id="8W2O">
    <property type="method" value="EM"/>
    <property type="resolution" value="3.49 A"/>
    <property type="chains" value="I=1-261"/>
</dbReference>
<dbReference type="PDBsum" id="5ZWN"/>
<dbReference type="PDBsum" id="6G90"/>
<dbReference type="PDBsum" id="6N7P"/>
<dbReference type="PDBsum" id="6N7R"/>
<dbReference type="PDBsum" id="7OQC"/>
<dbReference type="PDBsum" id="7OQE"/>
<dbReference type="PDBsum" id="8W2O"/>
<dbReference type="EMDB" id="EMD-0360"/>
<dbReference type="EMDB" id="EMD-0361"/>
<dbReference type="EMDB" id="EMD-13029"/>
<dbReference type="EMDB" id="EMD-13033"/>
<dbReference type="EMDB" id="EMD-4364"/>
<dbReference type="EMDB" id="EMD-43753"/>
<dbReference type="EMDB" id="EMD-6973"/>
<dbReference type="EMDB" id="EMD-8622"/>
<dbReference type="SMR" id="Q07508"/>
<dbReference type="BioGRID" id="31973">
    <property type="interactions" value="134"/>
</dbReference>
<dbReference type="ComplexPortal" id="CPX-23">
    <property type="entry name" value="U1 small nuclear ribonucleoprotein complex"/>
</dbReference>
<dbReference type="DIP" id="DIP-3003N"/>
<dbReference type="FunCoup" id="Q07508">
    <property type="interactions" value="1071"/>
</dbReference>
<dbReference type="IntAct" id="Q07508">
    <property type="interactions" value="36"/>
</dbReference>
<dbReference type="MINT" id="Q07508"/>
<dbReference type="STRING" id="4932.YDL087C"/>
<dbReference type="iPTMnet" id="Q07508"/>
<dbReference type="PaxDb" id="4932-YDL087C"/>
<dbReference type="PeptideAtlas" id="Q07508"/>
<dbReference type="EnsemblFungi" id="YDL087C_mRNA">
    <property type="protein sequence ID" value="YDL087C"/>
    <property type="gene ID" value="YDL087C"/>
</dbReference>
<dbReference type="GeneID" id="851471"/>
<dbReference type="KEGG" id="sce:YDL087C"/>
<dbReference type="AGR" id="SGD:S000002245"/>
<dbReference type="SGD" id="S000002245">
    <property type="gene designation" value="LUC7"/>
</dbReference>
<dbReference type="VEuPathDB" id="FungiDB:YDL087C"/>
<dbReference type="eggNOG" id="KOG0796">
    <property type="taxonomic scope" value="Eukaryota"/>
</dbReference>
<dbReference type="GeneTree" id="ENSGT00950000183213"/>
<dbReference type="HOGENOM" id="CLU_030397_1_0_1"/>
<dbReference type="InParanoid" id="Q07508"/>
<dbReference type="OMA" id="CPYDLFQ"/>
<dbReference type="OrthoDB" id="153872at2759"/>
<dbReference type="BioCyc" id="YEAST:G3O-29495-MONOMER"/>
<dbReference type="BioGRID-ORCS" id="851471">
    <property type="hits" value="9 hits in 10 CRISPR screens"/>
</dbReference>
<dbReference type="PRO" id="PR:Q07508"/>
<dbReference type="Proteomes" id="UP000002311">
    <property type="component" value="Chromosome IV"/>
</dbReference>
<dbReference type="RNAct" id="Q07508">
    <property type="molecule type" value="protein"/>
</dbReference>
<dbReference type="GO" id="GO:0000243">
    <property type="term" value="C:commitment complex"/>
    <property type="evidence" value="ECO:0000303"/>
    <property type="project" value="ComplexPortal"/>
</dbReference>
<dbReference type="GO" id="GO:0005829">
    <property type="term" value="C:cytosol"/>
    <property type="evidence" value="ECO:0000314"/>
    <property type="project" value="SGD"/>
</dbReference>
<dbReference type="GO" id="GO:0005634">
    <property type="term" value="C:nucleus"/>
    <property type="evidence" value="ECO:0000314"/>
    <property type="project" value="SGD"/>
</dbReference>
<dbReference type="GO" id="GO:0005681">
    <property type="term" value="C:spliceosomal complex"/>
    <property type="evidence" value="ECO:0000303"/>
    <property type="project" value="ComplexPortal"/>
</dbReference>
<dbReference type="GO" id="GO:0005685">
    <property type="term" value="C:U1 snRNP"/>
    <property type="evidence" value="ECO:0000315"/>
    <property type="project" value="SGD"/>
</dbReference>
<dbReference type="GO" id="GO:0071004">
    <property type="term" value="C:U2-type prespliceosome"/>
    <property type="evidence" value="ECO:0000314"/>
    <property type="project" value="SGD"/>
</dbReference>
<dbReference type="GO" id="GO:0003729">
    <property type="term" value="F:mRNA binding"/>
    <property type="evidence" value="ECO:0000314"/>
    <property type="project" value="SGD"/>
</dbReference>
<dbReference type="GO" id="GO:0000395">
    <property type="term" value="P:mRNA 5'-splice site recognition"/>
    <property type="evidence" value="ECO:0000303"/>
    <property type="project" value="ComplexPortal"/>
</dbReference>
<dbReference type="GO" id="GO:0006376">
    <property type="term" value="P:mRNA splice site recognition"/>
    <property type="evidence" value="ECO:0000315"/>
    <property type="project" value="SGD"/>
</dbReference>
<dbReference type="GO" id="GO:0000398">
    <property type="term" value="P:mRNA splicing, via spliceosome"/>
    <property type="evidence" value="ECO:0000303"/>
    <property type="project" value="ComplexPortal"/>
</dbReference>
<dbReference type="InterPro" id="IPR004882">
    <property type="entry name" value="Luc7-rel"/>
</dbReference>
<dbReference type="PANTHER" id="PTHR12375">
    <property type="entry name" value="RNA-BINDING PROTEIN LUC7-RELATED"/>
    <property type="match status" value="1"/>
</dbReference>
<dbReference type="Pfam" id="PF03194">
    <property type="entry name" value="LUC7"/>
    <property type="match status" value="1"/>
</dbReference>
<reference key="1">
    <citation type="journal article" date="1999" name="Int. J. Biochem. Cell Biol.">
        <title>Identification of the essential EPE1 gene involved in retention of secreted proteins on the cell surface of Saccharomyces cerevisiae cells.</title>
        <authorList>
            <person name="Alexieva K.I."/>
            <person name="Klis F."/>
            <person name="Wedler H."/>
            <person name="Wambutt R."/>
            <person name="Venkov P."/>
        </authorList>
    </citation>
    <scope>NUCLEOTIDE SEQUENCE [GENOMIC DNA]</scope>
    <scope>FUNCTION</scope>
</reference>
<reference key="2">
    <citation type="journal article" date="1997" name="Nature">
        <title>The nucleotide sequence of Saccharomyces cerevisiae chromosome IV.</title>
        <authorList>
            <person name="Jacq C."/>
            <person name="Alt-Moerbe J."/>
            <person name="Andre B."/>
            <person name="Arnold W."/>
            <person name="Bahr A."/>
            <person name="Ballesta J.P.G."/>
            <person name="Bargues M."/>
            <person name="Baron L."/>
            <person name="Becker A."/>
            <person name="Biteau N."/>
            <person name="Bloecker H."/>
            <person name="Blugeon C."/>
            <person name="Boskovic J."/>
            <person name="Brandt P."/>
            <person name="Brueckner M."/>
            <person name="Buitrago M.J."/>
            <person name="Coster F."/>
            <person name="Delaveau T."/>
            <person name="del Rey F."/>
            <person name="Dujon B."/>
            <person name="Eide L.G."/>
            <person name="Garcia-Cantalejo J.M."/>
            <person name="Goffeau A."/>
            <person name="Gomez-Peris A."/>
            <person name="Granotier C."/>
            <person name="Hanemann V."/>
            <person name="Hankeln T."/>
            <person name="Hoheisel J.D."/>
            <person name="Jaeger W."/>
            <person name="Jimenez A."/>
            <person name="Jonniaux J.-L."/>
            <person name="Kraemer C."/>
            <person name="Kuester H."/>
            <person name="Laamanen P."/>
            <person name="Legros Y."/>
            <person name="Louis E.J."/>
            <person name="Moeller-Rieker S."/>
            <person name="Monnet A."/>
            <person name="Moro M."/>
            <person name="Mueller-Auer S."/>
            <person name="Nussbaumer B."/>
            <person name="Paricio N."/>
            <person name="Paulin L."/>
            <person name="Perea J."/>
            <person name="Perez-Alonso M."/>
            <person name="Perez-Ortin J.E."/>
            <person name="Pohl T.M."/>
            <person name="Prydz H."/>
            <person name="Purnelle B."/>
            <person name="Rasmussen S.W."/>
            <person name="Remacha M.A."/>
            <person name="Revuelta J.L."/>
            <person name="Rieger M."/>
            <person name="Salom D."/>
            <person name="Saluz H.P."/>
            <person name="Saiz J.E."/>
            <person name="Saren A.-M."/>
            <person name="Schaefer M."/>
            <person name="Scharfe M."/>
            <person name="Schmidt E.R."/>
            <person name="Schneider C."/>
            <person name="Scholler P."/>
            <person name="Schwarz S."/>
            <person name="Soler-Mira A."/>
            <person name="Urrestarazu L.A."/>
            <person name="Verhasselt P."/>
            <person name="Vissers S."/>
            <person name="Voet M."/>
            <person name="Volckaert G."/>
            <person name="Wagner G."/>
            <person name="Wambutt R."/>
            <person name="Wedler E."/>
            <person name="Wedler H."/>
            <person name="Woelfl S."/>
            <person name="Harris D.E."/>
            <person name="Bowman S."/>
            <person name="Brown D."/>
            <person name="Churcher C.M."/>
            <person name="Connor R."/>
            <person name="Dedman K."/>
            <person name="Gentles S."/>
            <person name="Hamlin N."/>
            <person name="Hunt S."/>
            <person name="Jones L."/>
            <person name="McDonald S."/>
            <person name="Murphy L.D."/>
            <person name="Niblett D."/>
            <person name="Odell C."/>
            <person name="Oliver K."/>
            <person name="Rajandream M.A."/>
            <person name="Richards C."/>
            <person name="Shore L."/>
            <person name="Walsh S.V."/>
            <person name="Barrell B.G."/>
            <person name="Dietrich F.S."/>
            <person name="Mulligan J.T."/>
            <person name="Allen E."/>
            <person name="Araujo R."/>
            <person name="Aviles E."/>
            <person name="Berno A."/>
            <person name="Carpenter J."/>
            <person name="Chen E."/>
            <person name="Cherry J.M."/>
            <person name="Chung E."/>
            <person name="Duncan M."/>
            <person name="Hunicke-Smith S."/>
            <person name="Hyman R.W."/>
            <person name="Komp C."/>
            <person name="Lashkari D."/>
            <person name="Lew H."/>
            <person name="Lin D."/>
            <person name="Mosedale D."/>
            <person name="Nakahara K."/>
            <person name="Namath A."/>
            <person name="Oefner P."/>
            <person name="Oh C."/>
            <person name="Petel F.X."/>
            <person name="Roberts D."/>
            <person name="Schramm S."/>
            <person name="Schroeder M."/>
            <person name="Shogren T."/>
            <person name="Shroff N."/>
            <person name="Winant A."/>
            <person name="Yelton M.A."/>
            <person name="Botstein D."/>
            <person name="Davis R.W."/>
            <person name="Johnston M."/>
            <person name="Andrews S."/>
            <person name="Brinkman R."/>
            <person name="Cooper J."/>
            <person name="Ding H."/>
            <person name="Du Z."/>
            <person name="Favello A."/>
            <person name="Fulton L."/>
            <person name="Gattung S."/>
            <person name="Greco T."/>
            <person name="Hallsworth K."/>
            <person name="Hawkins J."/>
            <person name="Hillier L.W."/>
            <person name="Jier M."/>
            <person name="Johnson D."/>
            <person name="Johnston L."/>
            <person name="Kirsten J."/>
            <person name="Kucaba T."/>
            <person name="Langston Y."/>
            <person name="Latreille P."/>
            <person name="Le T."/>
            <person name="Mardis E."/>
            <person name="Menezes S."/>
            <person name="Miller N."/>
            <person name="Nhan M."/>
            <person name="Pauley A."/>
            <person name="Peluso D."/>
            <person name="Rifkin L."/>
            <person name="Riles L."/>
            <person name="Taich A."/>
            <person name="Trevaskis E."/>
            <person name="Vignati D."/>
            <person name="Wilcox L."/>
            <person name="Wohldman P."/>
            <person name="Vaudin M."/>
            <person name="Wilson R."/>
            <person name="Waterston R."/>
            <person name="Albermann K."/>
            <person name="Hani J."/>
            <person name="Heumann K."/>
            <person name="Kleine K."/>
            <person name="Mewes H.-W."/>
            <person name="Zollner A."/>
            <person name="Zaccaria P."/>
        </authorList>
    </citation>
    <scope>NUCLEOTIDE SEQUENCE [LARGE SCALE GENOMIC DNA]</scope>
    <source>
        <strain>ATCC 204508 / S288c</strain>
    </source>
</reference>
<reference key="3">
    <citation type="journal article" date="2014" name="G3 (Bethesda)">
        <title>The reference genome sequence of Saccharomyces cerevisiae: Then and now.</title>
        <authorList>
            <person name="Engel S.R."/>
            <person name="Dietrich F.S."/>
            <person name="Fisk D.G."/>
            <person name="Binkley G."/>
            <person name="Balakrishnan R."/>
            <person name="Costanzo M.C."/>
            <person name="Dwight S.S."/>
            <person name="Hitz B.C."/>
            <person name="Karra K."/>
            <person name="Nash R.S."/>
            <person name="Weng S."/>
            <person name="Wong E.D."/>
            <person name="Lloyd P."/>
            <person name="Skrzypek M.S."/>
            <person name="Miyasato S.R."/>
            <person name="Simison M."/>
            <person name="Cherry J.M."/>
        </authorList>
    </citation>
    <scope>GENOME REANNOTATION</scope>
    <source>
        <strain>ATCC 204508 / S288c</strain>
    </source>
</reference>
<reference key="4">
    <citation type="journal article" date="1999" name="EMBO J.">
        <title>Identification by mass spectrometry and functional analysis of novel proteins of the yeast [U4/U6.U5] tri-snRNP.</title>
        <authorList>
            <person name="Gottschalk A."/>
            <person name="Neubauer G."/>
            <person name="Banroques J."/>
            <person name="Mann M."/>
            <person name="Luehrmann R."/>
            <person name="Fabrizio P."/>
        </authorList>
    </citation>
    <scope>IDENTIFICATION IN THE U1 SNRNP COMPLEX</scope>
    <scope>IDENTIFICATION BY MASS SPECTROMETRY</scope>
</reference>
<reference key="5">
    <citation type="journal article" date="2002" name="Mol. Cell">
        <title>Composition and functional characterization of the yeast spliceosomal penta-snRNP.</title>
        <authorList>
            <person name="Stevens S.W."/>
            <person name="Ryan D.E."/>
            <person name="Ge H.Y."/>
            <person name="Moore R.E."/>
            <person name="Young M.K."/>
            <person name="Lee T.D."/>
            <person name="Abelson J."/>
        </authorList>
    </citation>
    <scope>IDENTIFICATION IN U1.U2.U4/U6.U5 PENTA-SNRNP COMPLEX</scope>
    <scope>IDENTIFICATION BY MASS SPECTROMETRY</scope>
</reference>
<reference key="6">
    <citation type="journal article" date="1999" name="Genes Dev.">
        <title>Luc7p, a novel yeast U1 snRNP protein with a role in 5' splice site recognition.</title>
        <authorList>
            <person name="Fortes P."/>
            <person name="Bilbao-Cortes D."/>
            <person name="Fornerod M."/>
            <person name="Rigaut G."/>
            <person name="Raymond W."/>
            <person name="Seraphin B."/>
            <person name="Mattaj I.W."/>
        </authorList>
    </citation>
    <scope>IDENTIFICATION IN THE U1 SNRNP COMPLEX</scope>
    <scope>FUNCTION</scope>
</reference>
<reference key="7">
    <citation type="journal article" date="2003" name="Nature">
        <title>Global analysis of protein localization in budding yeast.</title>
        <authorList>
            <person name="Huh W.-K."/>
            <person name="Falvo J.V."/>
            <person name="Gerke L.C."/>
            <person name="Carroll A.S."/>
            <person name="Howson R.W."/>
            <person name="Weissman J.S."/>
            <person name="O'Shea E.K."/>
        </authorList>
    </citation>
    <scope>SUBCELLULAR LOCATION [LARGE SCALE ANALYSIS]</scope>
</reference>
<reference key="8">
    <citation type="journal article" date="2003" name="Nature">
        <title>Global analysis of protein expression in yeast.</title>
        <authorList>
            <person name="Ghaemmaghami S."/>
            <person name="Huh W.-K."/>
            <person name="Bower K."/>
            <person name="Howson R.W."/>
            <person name="Belle A."/>
            <person name="Dephoure N."/>
            <person name="O'Shea E.K."/>
            <person name="Weissman J.S."/>
        </authorList>
    </citation>
    <scope>LEVEL OF PROTEIN EXPRESSION [LARGE SCALE ANALYSIS]</scope>
</reference>
<reference key="9">
    <citation type="journal article" date="2012" name="Proc. Natl. Acad. Sci. U.S.A.">
        <title>N-terminal acetylome analyses and functional insights of the N-terminal acetyltransferase NatB.</title>
        <authorList>
            <person name="Van Damme P."/>
            <person name="Lasa M."/>
            <person name="Polevoda B."/>
            <person name="Gazquez C."/>
            <person name="Elosegui-Artola A."/>
            <person name="Kim D.S."/>
            <person name="De Juan-Pardo E."/>
            <person name="Demeyer K."/>
            <person name="Hole K."/>
            <person name="Larrea E."/>
            <person name="Timmerman E."/>
            <person name="Prieto J."/>
            <person name="Arnesen T."/>
            <person name="Sherman F."/>
            <person name="Gevaert K."/>
            <person name="Aldabe R."/>
        </authorList>
    </citation>
    <scope>ACETYLATION [LARGE SCALE ANALYSIS] AT SER-2</scope>
    <scope>CLEAVAGE OF INITIATOR METHIONINE [LARGE SCALE ANALYSIS]</scope>
    <scope>IDENTIFICATION BY MASS SPECTROMETRY [LARGE SCALE ANALYSIS]</scope>
</reference>
<feature type="initiator methionine" description="Removed" evidence="9">
    <location>
        <position position="1"/>
    </location>
</feature>
<feature type="chain" id="PRO_0000255959" description="Protein LUC7">
    <location>
        <begin position="2"/>
        <end position="261"/>
    </location>
</feature>
<feature type="coiled-coil region" evidence="1">
    <location>
        <begin position="123"/>
        <end position="190"/>
    </location>
</feature>
<feature type="modified residue" description="N-acetylserine" evidence="9">
    <location>
        <position position="2"/>
    </location>
</feature>
<feature type="helix" evidence="11">
    <location>
        <begin position="7"/>
        <end position="18"/>
    </location>
</feature>
<feature type="strand" evidence="11">
    <location>
        <begin position="42"/>
        <end position="44"/>
    </location>
</feature>
<feature type="helix" evidence="11">
    <location>
        <begin position="47"/>
        <end position="50"/>
    </location>
</feature>
<feature type="helix" evidence="11">
    <location>
        <begin position="54"/>
        <end position="57"/>
    </location>
</feature>
<feature type="strand" evidence="11">
    <location>
        <begin position="58"/>
        <end position="61"/>
    </location>
</feature>
<feature type="helix" evidence="11">
    <location>
        <begin position="75"/>
        <end position="86"/>
    </location>
</feature>
<feature type="helix" evidence="11">
    <location>
        <begin position="92"/>
        <end position="120"/>
    </location>
</feature>
<feature type="helix" evidence="10">
    <location>
        <begin position="125"/>
        <end position="145"/>
    </location>
</feature>
<feature type="helix" evidence="10">
    <location>
        <begin position="169"/>
        <end position="195"/>
    </location>
</feature>
<feature type="strand" evidence="11">
    <location>
        <begin position="199"/>
        <end position="201"/>
    </location>
</feature>
<feature type="turn" evidence="11">
    <location>
        <begin position="202"/>
        <end position="205"/>
    </location>
</feature>
<feature type="strand" evidence="11">
    <location>
        <begin position="206"/>
        <end position="208"/>
    </location>
</feature>
<feature type="strand" evidence="11">
    <location>
        <begin position="210"/>
        <end position="212"/>
    </location>
</feature>
<feature type="helix" evidence="11">
    <location>
        <begin position="214"/>
        <end position="221"/>
    </location>
</feature>
<feature type="helix" evidence="11">
    <location>
        <begin position="224"/>
        <end position="243"/>
    </location>
</feature>
<sequence length="261" mass="30195">MSTMSTPAAEQRKLVEQLMGRDFSFRHNRYSHQKRDLGLHDPKICKSYLVGECPYDLFQGTKQSLGKCPQMHLTKHKIQYEREVKQGKTFPEFEREYLAILSRFVNECNGQISVALQNLKHTAEERMKIQQVTEELDVLDVRIGLMGQEIDSLIRADEVSMGMLQSVKLQELISKRKEVAKRVRNITENVGQSAQQKLQVCEVCGAYLSRLDTDRRLADHFLGKIHLGYVKMREDYDRLMKNNRTTNASKTATTLPGRRFV</sequence>
<proteinExistence type="evidence at protein level"/>
<protein>
    <recommendedName>
        <fullName>Protein LUC7</fullName>
    </recommendedName>
</protein>
<keyword id="KW-0002">3D-structure</keyword>
<keyword id="KW-0007">Acetylation</keyword>
<keyword id="KW-0175">Coiled coil</keyword>
<keyword id="KW-0507">mRNA processing</keyword>
<keyword id="KW-0508">mRNA splicing</keyword>
<keyword id="KW-0539">Nucleus</keyword>
<keyword id="KW-1185">Reference proteome</keyword>
<keyword id="KW-0687">Ribonucleoprotein</keyword>
<keyword id="KW-0747">Spliceosome</keyword>
<organism>
    <name type="scientific">Saccharomyces cerevisiae (strain ATCC 204508 / S288c)</name>
    <name type="common">Baker's yeast</name>
    <dbReference type="NCBI Taxonomy" id="559292"/>
    <lineage>
        <taxon>Eukaryota</taxon>
        <taxon>Fungi</taxon>
        <taxon>Dikarya</taxon>
        <taxon>Ascomycota</taxon>
        <taxon>Saccharomycotina</taxon>
        <taxon>Saccharomycetes</taxon>
        <taxon>Saccharomycetales</taxon>
        <taxon>Saccharomycetaceae</taxon>
        <taxon>Saccharomyces</taxon>
    </lineage>
</organism>